<protein>
    <recommendedName>
        <fullName evidence="1">2,3,4,5-tetrahydropyridine-2,6-dicarboxylate N-succinyltransferase</fullName>
        <ecNumber evidence="1">2.3.1.117</ecNumber>
    </recommendedName>
    <alternativeName>
        <fullName evidence="1">Tetrahydrodipicolinate N-succinyltransferase</fullName>
        <shortName evidence="1">THDP succinyltransferase</shortName>
        <shortName evidence="1">THP succinyltransferase</shortName>
        <shortName evidence="1">Tetrahydropicolinate succinylase</shortName>
    </alternativeName>
</protein>
<reference key="1">
    <citation type="journal article" date="2011" name="Stand. Genomic Sci.">
        <title>Complete genome sequence of 'Thioalkalivibrio sulfidophilus' HL-EbGr7.</title>
        <authorList>
            <person name="Muyzer G."/>
            <person name="Sorokin D.Y."/>
            <person name="Mavromatis K."/>
            <person name="Lapidus A."/>
            <person name="Clum A."/>
            <person name="Ivanova N."/>
            <person name="Pati A."/>
            <person name="d'Haeseleer P."/>
            <person name="Woyke T."/>
            <person name="Kyrpides N.C."/>
        </authorList>
    </citation>
    <scope>NUCLEOTIDE SEQUENCE [LARGE SCALE GENOMIC DNA]</scope>
    <source>
        <strain>HL-EbGR7</strain>
    </source>
</reference>
<gene>
    <name evidence="1" type="primary">dapD</name>
    <name type="ordered locus">Tgr7_1152</name>
</gene>
<evidence type="ECO:0000255" key="1">
    <source>
        <dbReference type="HAMAP-Rule" id="MF_00811"/>
    </source>
</evidence>
<dbReference type="EC" id="2.3.1.117" evidence="1"/>
<dbReference type="EMBL" id="CP001339">
    <property type="protein sequence ID" value="ACL72238.1"/>
    <property type="molecule type" value="Genomic_DNA"/>
</dbReference>
<dbReference type="RefSeq" id="WP_012637722.1">
    <property type="nucleotide sequence ID" value="NC_011901.1"/>
</dbReference>
<dbReference type="SMR" id="B8GPS1"/>
<dbReference type="STRING" id="396588.Tgr7_1152"/>
<dbReference type="KEGG" id="tgr:Tgr7_1152"/>
<dbReference type="eggNOG" id="COG2171">
    <property type="taxonomic scope" value="Bacteria"/>
</dbReference>
<dbReference type="HOGENOM" id="CLU_050859_0_1_6"/>
<dbReference type="OrthoDB" id="9775362at2"/>
<dbReference type="UniPathway" id="UPA00034">
    <property type="reaction ID" value="UER00019"/>
</dbReference>
<dbReference type="Proteomes" id="UP000002383">
    <property type="component" value="Chromosome"/>
</dbReference>
<dbReference type="GO" id="GO:0005737">
    <property type="term" value="C:cytoplasm"/>
    <property type="evidence" value="ECO:0007669"/>
    <property type="project" value="UniProtKB-SubCell"/>
</dbReference>
<dbReference type="GO" id="GO:0008666">
    <property type="term" value="F:2,3,4,5-tetrahydropyridine-2,6-dicarboxylate N-succinyltransferase activity"/>
    <property type="evidence" value="ECO:0007669"/>
    <property type="project" value="UniProtKB-UniRule"/>
</dbReference>
<dbReference type="GO" id="GO:0016779">
    <property type="term" value="F:nucleotidyltransferase activity"/>
    <property type="evidence" value="ECO:0007669"/>
    <property type="project" value="TreeGrafter"/>
</dbReference>
<dbReference type="GO" id="GO:0019877">
    <property type="term" value="P:diaminopimelate biosynthetic process"/>
    <property type="evidence" value="ECO:0007669"/>
    <property type="project" value="UniProtKB-UniRule"/>
</dbReference>
<dbReference type="GO" id="GO:0009089">
    <property type="term" value="P:lysine biosynthetic process via diaminopimelate"/>
    <property type="evidence" value="ECO:0007669"/>
    <property type="project" value="UniProtKB-UniRule"/>
</dbReference>
<dbReference type="CDD" id="cd03350">
    <property type="entry name" value="LbH_THP_succinylT"/>
    <property type="match status" value="1"/>
</dbReference>
<dbReference type="Gene3D" id="2.160.10.10">
    <property type="entry name" value="Hexapeptide repeat proteins"/>
    <property type="match status" value="1"/>
</dbReference>
<dbReference type="Gene3D" id="1.10.166.10">
    <property type="entry name" value="Tetrahydrodipicolinate-N-succinyltransferase, N-terminal domain"/>
    <property type="match status" value="1"/>
</dbReference>
<dbReference type="HAMAP" id="MF_00811">
    <property type="entry name" value="DapD"/>
    <property type="match status" value="1"/>
</dbReference>
<dbReference type="InterPro" id="IPR005664">
    <property type="entry name" value="DapD_Trfase_Hexpep_rpt_fam"/>
</dbReference>
<dbReference type="InterPro" id="IPR001451">
    <property type="entry name" value="Hexapep"/>
</dbReference>
<dbReference type="InterPro" id="IPR018357">
    <property type="entry name" value="Hexapep_transf_CS"/>
</dbReference>
<dbReference type="InterPro" id="IPR023180">
    <property type="entry name" value="THP_succinylTrfase_dom1"/>
</dbReference>
<dbReference type="InterPro" id="IPR037133">
    <property type="entry name" value="THP_succinylTrfase_N_sf"/>
</dbReference>
<dbReference type="InterPro" id="IPR011004">
    <property type="entry name" value="Trimer_LpxA-like_sf"/>
</dbReference>
<dbReference type="NCBIfam" id="TIGR00965">
    <property type="entry name" value="dapD"/>
    <property type="match status" value="1"/>
</dbReference>
<dbReference type="NCBIfam" id="NF008808">
    <property type="entry name" value="PRK11830.1"/>
    <property type="match status" value="1"/>
</dbReference>
<dbReference type="PANTHER" id="PTHR19136:SF52">
    <property type="entry name" value="2,3,4,5-TETRAHYDROPYRIDINE-2,6-DICARBOXYLATE N-SUCCINYLTRANSFERASE"/>
    <property type="match status" value="1"/>
</dbReference>
<dbReference type="PANTHER" id="PTHR19136">
    <property type="entry name" value="MOLYBDENUM COFACTOR GUANYLYLTRANSFERASE"/>
    <property type="match status" value="1"/>
</dbReference>
<dbReference type="Pfam" id="PF14602">
    <property type="entry name" value="Hexapep_2"/>
    <property type="match status" value="1"/>
</dbReference>
<dbReference type="Pfam" id="PF14805">
    <property type="entry name" value="THDPS_N_2"/>
    <property type="match status" value="1"/>
</dbReference>
<dbReference type="SUPFAM" id="SSF51161">
    <property type="entry name" value="Trimeric LpxA-like enzymes"/>
    <property type="match status" value="1"/>
</dbReference>
<dbReference type="PROSITE" id="PS00101">
    <property type="entry name" value="HEXAPEP_TRANSFERASES"/>
    <property type="match status" value="1"/>
</dbReference>
<organism>
    <name type="scientific">Thioalkalivibrio sulfidiphilus (strain HL-EbGR7)</name>
    <dbReference type="NCBI Taxonomy" id="396588"/>
    <lineage>
        <taxon>Bacteria</taxon>
        <taxon>Pseudomonadati</taxon>
        <taxon>Pseudomonadota</taxon>
        <taxon>Gammaproteobacteria</taxon>
        <taxon>Chromatiales</taxon>
        <taxon>Ectothiorhodospiraceae</taxon>
        <taxon>Thioalkalivibrio</taxon>
    </lineage>
</organism>
<keyword id="KW-0012">Acyltransferase</keyword>
<keyword id="KW-0028">Amino-acid biosynthesis</keyword>
<keyword id="KW-0963">Cytoplasm</keyword>
<keyword id="KW-0220">Diaminopimelate biosynthesis</keyword>
<keyword id="KW-0457">Lysine biosynthesis</keyword>
<keyword id="KW-1185">Reference proteome</keyword>
<keyword id="KW-0677">Repeat</keyword>
<keyword id="KW-0808">Transferase</keyword>
<sequence>MSKLQEIIIEAFERRADITPRNVETHVKDAVMEAIDMLDRGTARVAEKKDGEWIVNDWLKKAVLLSFRIHDNQFIKGGFTNYYDKVPSKWADANSRDFREGGARVVPPATARKGSYIAPGVVLMPSYVNIGAYVDSGTMVDTWATVGSCAQIGKNVHLSGGVGIGGVLEPLQAAPTIIEDNCFIGARSEVVEGVIVEEGSVISMGVYIGQSTRIYDREKDEILYGRVPAGSVVVSGNLPSKDGKYSLYCAVIVKKVDEKTRSKVGINELLRDI</sequence>
<feature type="chain" id="PRO_1000148589" description="2,3,4,5-tetrahydropyridine-2,6-dicarboxylate N-succinyltransferase">
    <location>
        <begin position="1"/>
        <end position="273"/>
    </location>
</feature>
<feature type="binding site" evidence="1">
    <location>
        <position position="104"/>
    </location>
    <ligand>
        <name>substrate</name>
    </ligand>
</feature>
<feature type="binding site" evidence="1">
    <location>
        <position position="141"/>
    </location>
    <ligand>
        <name>substrate</name>
    </ligand>
</feature>
<comment type="catalytic activity">
    <reaction evidence="1">
        <text>(S)-2,3,4,5-tetrahydrodipicolinate + succinyl-CoA + H2O = (S)-2-succinylamino-6-oxoheptanedioate + CoA</text>
        <dbReference type="Rhea" id="RHEA:17325"/>
        <dbReference type="ChEBI" id="CHEBI:15377"/>
        <dbReference type="ChEBI" id="CHEBI:15685"/>
        <dbReference type="ChEBI" id="CHEBI:16845"/>
        <dbReference type="ChEBI" id="CHEBI:57287"/>
        <dbReference type="ChEBI" id="CHEBI:57292"/>
        <dbReference type="EC" id="2.3.1.117"/>
    </reaction>
</comment>
<comment type="pathway">
    <text evidence="1">Amino-acid biosynthesis; L-lysine biosynthesis via DAP pathway; LL-2,6-diaminopimelate from (S)-tetrahydrodipicolinate (succinylase route): step 1/3.</text>
</comment>
<comment type="subunit">
    <text evidence="1">Homotrimer.</text>
</comment>
<comment type="subcellular location">
    <subcellularLocation>
        <location evidence="1">Cytoplasm</location>
    </subcellularLocation>
</comment>
<comment type="similarity">
    <text evidence="1">Belongs to the transferase hexapeptide repeat family.</text>
</comment>
<accession>B8GPS1</accession>
<name>DAPD_THISH</name>
<proteinExistence type="inferred from homology"/>